<reference key="1">
    <citation type="journal article" date="2005" name="J. Bacteriol.">
        <title>Insights on evolution of virulence and resistance from the complete genome analysis of an early methicillin-resistant Staphylococcus aureus strain and a biofilm-producing methicillin-resistant Staphylococcus epidermidis strain.</title>
        <authorList>
            <person name="Gill S.R."/>
            <person name="Fouts D.E."/>
            <person name="Archer G.L."/>
            <person name="Mongodin E.F."/>
            <person name="DeBoy R.T."/>
            <person name="Ravel J."/>
            <person name="Paulsen I.T."/>
            <person name="Kolonay J.F."/>
            <person name="Brinkac L.M."/>
            <person name="Beanan M.J."/>
            <person name="Dodson R.J."/>
            <person name="Daugherty S.C."/>
            <person name="Madupu R."/>
            <person name="Angiuoli S.V."/>
            <person name="Durkin A.S."/>
            <person name="Haft D.H."/>
            <person name="Vamathevan J.J."/>
            <person name="Khouri H."/>
            <person name="Utterback T.R."/>
            <person name="Lee C."/>
            <person name="Dimitrov G."/>
            <person name="Jiang L."/>
            <person name="Qin H."/>
            <person name="Weidman J."/>
            <person name="Tran K."/>
            <person name="Kang K.H."/>
            <person name="Hance I.R."/>
            <person name="Nelson K.E."/>
            <person name="Fraser C.M."/>
        </authorList>
    </citation>
    <scope>NUCLEOTIDE SEQUENCE [LARGE SCALE GENOMIC DNA]</scope>
    <source>
        <strain>COL</strain>
    </source>
</reference>
<gene>
    <name type="primary">fur</name>
    <name type="synonym">furA</name>
    <name type="synonym">mreR</name>
    <name type="ordered locus">SACOL1611</name>
</gene>
<sequence>MNTNDAIKILKENGLKYTDKRKDMLDIFVEEDKYINAKYIQQVMDENYPGISFDTIYRNLHLFKDLGIIENTELDGEMKFRIACTNHHHHHFICEKCGDTKVIDYCPIDQIKLSLPGVNIHKHKLEVYGVCESCQD</sequence>
<proteinExistence type="inferred from homology"/>
<keyword id="KW-0963">Cytoplasm</keyword>
<keyword id="KW-0238">DNA-binding</keyword>
<keyword id="KW-0408">Iron</keyword>
<keyword id="KW-0479">Metal-binding</keyword>
<keyword id="KW-0678">Repressor</keyword>
<keyword id="KW-0804">Transcription</keyword>
<keyword id="KW-0805">Transcription regulation</keyword>
<keyword id="KW-0862">Zinc</keyword>
<accession>Q5HFK6</accession>
<organism>
    <name type="scientific">Staphylococcus aureus (strain COL)</name>
    <dbReference type="NCBI Taxonomy" id="93062"/>
    <lineage>
        <taxon>Bacteria</taxon>
        <taxon>Bacillati</taxon>
        <taxon>Bacillota</taxon>
        <taxon>Bacilli</taxon>
        <taxon>Bacillales</taxon>
        <taxon>Staphylococcaceae</taxon>
        <taxon>Staphylococcus</taxon>
    </lineage>
</organism>
<evidence type="ECO:0000250" key="1"/>
<evidence type="ECO:0000305" key="2"/>
<comment type="function">
    <text evidence="1">Acts as a global negative controlling element, employing Fe(2+) as a cofactor to bind the operator of the repressed genes.</text>
</comment>
<comment type="subunit">
    <text evidence="1">Homodimer.</text>
</comment>
<comment type="subcellular location">
    <subcellularLocation>
        <location evidence="1">Cytoplasm</location>
    </subcellularLocation>
</comment>
<comment type="similarity">
    <text evidence="2">Belongs to the Fur family.</text>
</comment>
<dbReference type="EMBL" id="CP000046">
    <property type="protein sequence ID" value="AAW38227.1"/>
    <property type="molecule type" value="Genomic_DNA"/>
</dbReference>
<dbReference type="RefSeq" id="WP_001095260.1">
    <property type="nucleotide sequence ID" value="NZ_JBGOFO010000003.1"/>
</dbReference>
<dbReference type="SMR" id="Q5HFK6"/>
<dbReference type="KEGG" id="sac:SACOL1611"/>
<dbReference type="HOGENOM" id="CLU_096072_5_1_9"/>
<dbReference type="Proteomes" id="UP000000530">
    <property type="component" value="Chromosome"/>
</dbReference>
<dbReference type="GO" id="GO:0005737">
    <property type="term" value="C:cytoplasm"/>
    <property type="evidence" value="ECO:0007669"/>
    <property type="project" value="UniProtKB-SubCell"/>
</dbReference>
<dbReference type="GO" id="GO:0003700">
    <property type="term" value="F:DNA-binding transcription factor activity"/>
    <property type="evidence" value="ECO:0007669"/>
    <property type="project" value="InterPro"/>
</dbReference>
<dbReference type="GO" id="GO:0000976">
    <property type="term" value="F:transcription cis-regulatory region binding"/>
    <property type="evidence" value="ECO:0007669"/>
    <property type="project" value="TreeGrafter"/>
</dbReference>
<dbReference type="GO" id="GO:0008270">
    <property type="term" value="F:zinc ion binding"/>
    <property type="evidence" value="ECO:0007669"/>
    <property type="project" value="TreeGrafter"/>
</dbReference>
<dbReference type="GO" id="GO:0045892">
    <property type="term" value="P:negative regulation of DNA-templated transcription"/>
    <property type="evidence" value="ECO:0007669"/>
    <property type="project" value="TreeGrafter"/>
</dbReference>
<dbReference type="GO" id="GO:1900376">
    <property type="term" value="P:regulation of secondary metabolite biosynthetic process"/>
    <property type="evidence" value="ECO:0007669"/>
    <property type="project" value="TreeGrafter"/>
</dbReference>
<dbReference type="CDD" id="cd07153">
    <property type="entry name" value="Fur_like"/>
    <property type="match status" value="1"/>
</dbReference>
<dbReference type="Gene3D" id="3.30.1490.190">
    <property type="match status" value="1"/>
</dbReference>
<dbReference type="Gene3D" id="1.10.10.10">
    <property type="entry name" value="Winged helix-like DNA-binding domain superfamily/Winged helix DNA-binding domain"/>
    <property type="match status" value="1"/>
</dbReference>
<dbReference type="InterPro" id="IPR002481">
    <property type="entry name" value="FUR"/>
</dbReference>
<dbReference type="InterPro" id="IPR043135">
    <property type="entry name" value="Fur_C"/>
</dbReference>
<dbReference type="InterPro" id="IPR036388">
    <property type="entry name" value="WH-like_DNA-bd_sf"/>
</dbReference>
<dbReference type="InterPro" id="IPR036390">
    <property type="entry name" value="WH_DNA-bd_sf"/>
</dbReference>
<dbReference type="PANTHER" id="PTHR33202:SF1">
    <property type="entry name" value="FERRIC UPTAKE REGULATION PROTEIN"/>
    <property type="match status" value="1"/>
</dbReference>
<dbReference type="PANTHER" id="PTHR33202">
    <property type="entry name" value="ZINC UPTAKE REGULATION PROTEIN"/>
    <property type="match status" value="1"/>
</dbReference>
<dbReference type="Pfam" id="PF01475">
    <property type="entry name" value="FUR"/>
    <property type="match status" value="1"/>
</dbReference>
<dbReference type="SUPFAM" id="SSF46785">
    <property type="entry name" value="Winged helix' DNA-binding domain"/>
    <property type="match status" value="1"/>
</dbReference>
<feature type="chain" id="PRO_0000095572" description="Ferric uptake regulation protein">
    <location>
        <begin position="1"/>
        <end position="136"/>
    </location>
</feature>
<feature type="region of interest" description="DNA-binding" evidence="1">
    <location>
        <begin position="1"/>
        <end position="85"/>
    </location>
</feature>
<feature type="region of interest" description="Dimerization" evidence="1">
    <location>
        <begin position="86"/>
        <end position="136"/>
    </location>
</feature>
<feature type="binding site" evidence="1">
    <location>
        <position position="88"/>
    </location>
    <ligand>
        <name>Fe cation</name>
        <dbReference type="ChEBI" id="CHEBI:24875"/>
    </ligand>
</feature>
<feature type="binding site" evidence="1">
    <location>
        <position position="90"/>
    </location>
    <ligand>
        <name>Fe cation</name>
        <dbReference type="ChEBI" id="CHEBI:24875"/>
    </ligand>
</feature>
<feature type="binding site" evidence="1">
    <location>
        <position position="94"/>
    </location>
    <ligand>
        <name>Zn(2+)</name>
        <dbReference type="ChEBI" id="CHEBI:29105"/>
    </ligand>
</feature>
<feature type="binding site" evidence="1">
    <location>
        <position position="97"/>
    </location>
    <ligand>
        <name>Zn(2+)</name>
        <dbReference type="ChEBI" id="CHEBI:29105"/>
    </ligand>
</feature>
<feature type="binding site" evidence="1">
    <location>
        <position position="109"/>
    </location>
    <ligand>
        <name>Fe cation</name>
        <dbReference type="ChEBI" id="CHEBI:24875"/>
    </ligand>
</feature>
<feature type="binding site" evidence="1">
    <location>
        <position position="123"/>
    </location>
    <ligand>
        <name>Fe cation</name>
        <dbReference type="ChEBI" id="CHEBI:24875"/>
    </ligand>
</feature>
<name>FUR_STAAC</name>
<protein>
    <recommendedName>
        <fullName>Ferric uptake regulation protein</fullName>
        <shortName>Ferric uptake regulator</shortName>
    </recommendedName>
</protein>